<organism>
    <name type="scientific">Arabidopsis thaliana</name>
    <name type="common">Mouse-ear cress</name>
    <dbReference type="NCBI Taxonomy" id="3702"/>
    <lineage>
        <taxon>Eukaryota</taxon>
        <taxon>Viridiplantae</taxon>
        <taxon>Streptophyta</taxon>
        <taxon>Embryophyta</taxon>
        <taxon>Tracheophyta</taxon>
        <taxon>Spermatophyta</taxon>
        <taxon>Magnoliopsida</taxon>
        <taxon>eudicotyledons</taxon>
        <taxon>Gunneridae</taxon>
        <taxon>Pentapetalae</taxon>
        <taxon>rosids</taxon>
        <taxon>malvids</taxon>
        <taxon>Brassicales</taxon>
        <taxon>Brassicaceae</taxon>
        <taxon>Camelineae</taxon>
        <taxon>Arabidopsis</taxon>
    </lineage>
</organism>
<proteinExistence type="evidence at protein level"/>
<evidence type="ECO:0000250" key="1">
    <source>
        <dbReference type="UniProtKB" id="Q9SF32"/>
    </source>
</evidence>
<evidence type="ECO:0000255" key="2">
    <source>
        <dbReference type="PROSITE-ProRule" id="PRU00116"/>
    </source>
</evidence>
<evidence type="ECO:0000255" key="3">
    <source>
        <dbReference type="PROSITE-ProRule" id="PRU00768"/>
    </source>
</evidence>
<evidence type="ECO:0000256" key="4">
    <source>
        <dbReference type="SAM" id="MobiDB-lite"/>
    </source>
</evidence>
<evidence type="ECO:0000269" key="5">
    <source>
    </source>
</evidence>
<evidence type="ECO:0000303" key="6">
    <source>
    </source>
</evidence>
<evidence type="ECO:0000305" key="7"/>
<evidence type="ECO:0000312" key="8">
    <source>
        <dbReference type="Araport" id="AT1G51960"/>
    </source>
</evidence>
<evidence type="ECO:0000312" key="9">
    <source>
        <dbReference type="EMBL" id="AAD12670.1"/>
    </source>
</evidence>
<protein>
    <recommendedName>
        <fullName evidence="6">Protein IQ-DOMAIN 27</fullName>
        <shortName evidence="6">AtIQD27</shortName>
    </recommendedName>
</protein>
<keyword id="KW-0112">Calmodulin-binding</keyword>
<keyword id="KW-0963">Cytoplasm</keyword>
<keyword id="KW-0206">Cytoskeleton</keyword>
<keyword id="KW-0539">Nucleus</keyword>
<keyword id="KW-1185">Reference proteome</keyword>
<keyword id="KW-0677">Repeat</keyword>
<comment type="function">
    <text evidence="1">May be involved in cooperative interactions with calmodulins or calmodulin-like proteins (By similarity). Recruits calmodulin proteins to microtubules, thus being a potential scaffold in cellular signaling and trafficking (By similarity). May associate with nucleic acids and regulate gene expression at the transcriptional or post-transcriptional level (By similarity).</text>
</comment>
<comment type="subunit">
    <text evidence="1">Binds to multiple calmodulin (CaM) in the presence of Ca(2+) and CaM-like proteins.</text>
</comment>
<comment type="subcellular location">
    <subcellularLocation>
        <location evidence="3">Nucleus</location>
    </subcellularLocation>
    <subcellularLocation>
        <location evidence="5">Nucleus envelope</location>
    </subcellularLocation>
    <subcellularLocation>
        <location evidence="5">Cytoplasm</location>
        <location evidence="5">Cytoskeleton</location>
    </subcellularLocation>
</comment>
<comment type="similarity">
    <text evidence="7">Belongs to the IQD family.</text>
</comment>
<accession>Q9ZU28</accession>
<dbReference type="EMBL" id="AC006216">
    <property type="protein sequence ID" value="AAD12670.1"/>
    <property type="molecule type" value="Genomic_DNA"/>
</dbReference>
<dbReference type="EMBL" id="CP002684">
    <property type="protein sequence ID" value="AEE32739.1"/>
    <property type="molecule type" value="Genomic_DNA"/>
</dbReference>
<dbReference type="EMBL" id="DQ056492">
    <property type="protein sequence ID" value="AAY78649.1"/>
    <property type="molecule type" value="mRNA"/>
</dbReference>
<dbReference type="PIR" id="A96559">
    <property type="entry name" value="A96559"/>
</dbReference>
<dbReference type="RefSeq" id="NP_175608.1">
    <property type="nucleotide sequence ID" value="NM_104077.2"/>
</dbReference>
<dbReference type="SMR" id="Q9ZU28"/>
<dbReference type="STRING" id="3702.Q9ZU28"/>
<dbReference type="GlyGen" id="Q9ZU28">
    <property type="glycosylation" value="1 site"/>
</dbReference>
<dbReference type="PaxDb" id="3702-AT1G51960.1"/>
<dbReference type="EnsemblPlants" id="AT1G51960.1">
    <property type="protein sequence ID" value="AT1G51960.1"/>
    <property type="gene ID" value="AT1G51960"/>
</dbReference>
<dbReference type="GeneID" id="841624"/>
<dbReference type="Gramene" id="AT1G51960.1">
    <property type="protein sequence ID" value="AT1G51960.1"/>
    <property type="gene ID" value="AT1G51960"/>
</dbReference>
<dbReference type="KEGG" id="ath:AT1G51960"/>
<dbReference type="Araport" id="AT1G51960"/>
<dbReference type="TAIR" id="AT1G51960">
    <property type="gene designation" value="IQD27"/>
</dbReference>
<dbReference type="eggNOG" id="ENOG502QVYZ">
    <property type="taxonomic scope" value="Eukaryota"/>
</dbReference>
<dbReference type="HOGENOM" id="CLU_042730_3_0_1"/>
<dbReference type="InParanoid" id="Q9ZU28"/>
<dbReference type="OMA" id="ITKEERW"/>
<dbReference type="PhylomeDB" id="Q9ZU28"/>
<dbReference type="PRO" id="PR:Q9ZU28"/>
<dbReference type="Proteomes" id="UP000006548">
    <property type="component" value="Chromosome 1"/>
</dbReference>
<dbReference type="ExpressionAtlas" id="Q9ZU28">
    <property type="expression patterns" value="baseline and differential"/>
</dbReference>
<dbReference type="GO" id="GO:0005737">
    <property type="term" value="C:cytoplasm"/>
    <property type="evidence" value="ECO:0007669"/>
    <property type="project" value="UniProtKB-KW"/>
</dbReference>
<dbReference type="GO" id="GO:0005856">
    <property type="term" value="C:cytoskeleton"/>
    <property type="evidence" value="ECO:0007669"/>
    <property type="project" value="UniProtKB-SubCell"/>
</dbReference>
<dbReference type="GO" id="GO:0005635">
    <property type="term" value="C:nuclear envelope"/>
    <property type="evidence" value="ECO:0007669"/>
    <property type="project" value="UniProtKB-SubCell"/>
</dbReference>
<dbReference type="GO" id="GO:0005516">
    <property type="term" value="F:calmodulin binding"/>
    <property type="evidence" value="ECO:0007669"/>
    <property type="project" value="UniProtKB-KW"/>
</dbReference>
<dbReference type="Gene3D" id="1.20.5.190">
    <property type="match status" value="1"/>
</dbReference>
<dbReference type="InterPro" id="IPR025064">
    <property type="entry name" value="DUF4005"/>
</dbReference>
<dbReference type="InterPro" id="IPR000048">
    <property type="entry name" value="IQ_motif_EF-hand-BS"/>
</dbReference>
<dbReference type="InterPro" id="IPR027417">
    <property type="entry name" value="P-loop_NTPase"/>
</dbReference>
<dbReference type="PANTHER" id="PTHR32295">
    <property type="entry name" value="IQ-DOMAIN 5-RELATED"/>
    <property type="match status" value="1"/>
</dbReference>
<dbReference type="PANTHER" id="PTHR32295:SF153">
    <property type="entry name" value="PROTEIN IQ-DOMAIN 27"/>
    <property type="match status" value="1"/>
</dbReference>
<dbReference type="Pfam" id="PF13178">
    <property type="entry name" value="DUF4005"/>
    <property type="match status" value="1"/>
</dbReference>
<dbReference type="Pfam" id="PF00612">
    <property type="entry name" value="IQ"/>
    <property type="match status" value="2"/>
</dbReference>
<dbReference type="SMART" id="SM00015">
    <property type="entry name" value="IQ"/>
    <property type="match status" value="2"/>
</dbReference>
<dbReference type="SUPFAM" id="SSF52540">
    <property type="entry name" value="P-loop containing nucleoside triphosphate hydrolases"/>
    <property type="match status" value="1"/>
</dbReference>
<dbReference type="PROSITE" id="PS50096">
    <property type="entry name" value="IQ"/>
    <property type="match status" value="2"/>
</dbReference>
<gene>
    <name evidence="6" type="primary">IQD27</name>
    <name evidence="8" type="ordered locus">At1g51960</name>
    <name evidence="9" type="ORF">F5F19.1</name>
    <name type="ORF">T14L22.17</name>
</gene>
<reference key="1">
    <citation type="journal article" date="2000" name="Nature">
        <title>Sequence and analysis of chromosome 1 of the plant Arabidopsis thaliana.</title>
        <authorList>
            <person name="Theologis A."/>
            <person name="Ecker J.R."/>
            <person name="Palm C.J."/>
            <person name="Federspiel N.A."/>
            <person name="Kaul S."/>
            <person name="White O."/>
            <person name="Alonso J."/>
            <person name="Altafi H."/>
            <person name="Araujo R."/>
            <person name="Bowman C.L."/>
            <person name="Brooks S.Y."/>
            <person name="Buehler E."/>
            <person name="Chan A."/>
            <person name="Chao Q."/>
            <person name="Chen H."/>
            <person name="Cheuk R.F."/>
            <person name="Chin C.W."/>
            <person name="Chung M.K."/>
            <person name="Conn L."/>
            <person name="Conway A.B."/>
            <person name="Conway A.R."/>
            <person name="Creasy T.H."/>
            <person name="Dewar K."/>
            <person name="Dunn P."/>
            <person name="Etgu P."/>
            <person name="Feldblyum T.V."/>
            <person name="Feng J.-D."/>
            <person name="Fong B."/>
            <person name="Fujii C.Y."/>
            <person name="Gill J.E."/>
            <person name="Goldsmith A.D."/>
            <person name="Haas B."/>
            <person name="Hansen N.F."/>
            <person name="Hughes B."/>
            <person name="Huizar L."/>
            <person name="Hunter J.L."/>
            <person name="Jenkins J."/>
            <person name="Johnson-Hopson C."/>
            <person name="Khan S."/>
            <person name="Khaykin E."/>
            <person name="Kim C.J."/>
            <person name="Koo H.L."/>
            <person name="Kremenetskaia I."/>
            <person name="Kurtz D.B."/>
            <person name="Kwan A."/>
            <person name="Lam B."/>
            <person name="Langin-Hooper S."/>
            <person name="Lee A."/>
            <person name="Lee J.M."/>
            <person name="Lenz C.A."/>
            <person name="Li J.H."/>
            <person name="Li Y.-P."/>
            <person name="Lin X."/>
            <person name="Liu S.X."/>
            <person name="Liu Z.A."/>
            <person name="Luros J.S."/>
            <person name="Maiti R."/>
            <person name="Marziali A."/>
            <person name="Militscher J."/>
            <person name="Miranda M."/>
            <person name="Nguyen M."/>
            <person name="Nierman W.C."/>
            <person name="Osborne B.I."/>
            <person name="Pai G."/>
            <person name="Peterson J."/>
            <person name="Pham P.K."/>
            <person name="Rizzo M."/>
            <person name="Rooney T."/>
            <person name="Rowley D."/>
            <person name="Sakano H."/>
            <person name="Salzberg S.L."/>
            <person name="Schwartz J.R."/>
            <person name="Shinn P."/>
            <person name="Southwick A.M."/>
            <person name="Sun H."/>
            <person name="Tallon L.J."/>
            <person name="Tambunga G."/>
            <person name="Toriumi M.J."/>
            <person name="Town C.D."/>
            <person name="Utterback T."/>
            <person name="Van Aken S."/>
            <person name="Vaysberg M."/>
            <person name="Vysotskaia V.S."/>
            <person name="Walker M."/>
            <person name="Wu D."/>
            <person name="Yu G."/>
            <person name="Fraser C.M."/>
            <person name="Venter J.C."/>
            <person name="Davis R.W."/>
        </authorList>
    </citation>
    <scope>NUCLEOTIDE SEQUENCE [LARGE SCALE GENOMIC DNA]</scope>
    <source>
        <strain>cv. Columbia</strain>
    </source>
</reference>
<reference key="2">
    <citation type="journal article" date="2017" name="Plant J.">
        <title>Araport11: a complete reannotation of the Arabidopsis thaliana reference genome.</title>
        <authorList>
            <person name="Cheng C.Y."/>
            <person name="Krishnakumar V."/>
            <person name="Chan A.P."/>
            <person name="Thibaud-Nissen F."/>
            <person name="Schobel S."/>
            <person name="Town C.D."/>
        </authorList>
    </citation>
    <scope>GENOME REANNOTATION</scope>
    <source>
        <strain>cv. Columbia</strain>
    </source>
</reference>
<reference key="3">
    <citation type="journal article" date="2006" name="Plant Biotechnol. J.">
        <title>Simultaneous high-throughput recombinational cloning of open reading frames in closed and open configurations.</title>
        <authorList>
            <person name="Underwood B.A."/>
            <person name="Vanderhaeghen R."/>
            <person name="Whitford R."/>
            <person name="Town C.D."/>
            <person name="Hilson P."/>
        </authorList>
    </citation>
    <scope>NUCLEOTIDE SEQUENCE [LARGE SCALE MRNA]</scope>
    <source>
        <strain>cv. Columbia</strain>
    </source>
</reference>
<reference key="4">
    <citation type="journal article" date="2005" name="BMC Evol. Biol.">
        <title>Genome-wide comparative analysis of the IQD gene families in Arabidopsis thaliana and Oryza sativa.</title>
        <authorList>
            <person name="Abel S."/>
            <person name="Savchenko T."/>
            <person name="Levy M."/>
        </authorList>
    </citation>
    <scope>INTERACTION WITH CALMODULIN</scope>
    <scope>GENE FAMILY</scope>
    <scope>NOMENCLATURE</scope>
    <source>
        <strain>cv. Columbia</strain>
    </source>
</reference>
<reference key="5">
    <citation type="journal article" date="2017" name="Plant Physiol.">
        <title>The IQD family of calmodulin-binding proteins links calcium signaling to microtubules, membrane subdomains, and the nucleus.</title>
        <authorList>
            <person name="Buerstenbinder K."/>
            <person name="Moeller B."/>
            <person name="Ploetner R."/>
            <person name="Stamm G."/>
            <person name="Hause G."/>
            <person name="Mitra D."/>
            <person name="Abel S."/>
        </authorList>
    </citation>
    <scope>SUBCELLULAR LOCATION</scope>
    <source>
        <strain>cv. Columbia</strain>
    </source>
</reference>
<reference key="6">
    <citation type="journal article" date="2017" name="Plant Signal. Behav.">
        <title>Functions of IQD proteins as hubs in cellular calcium and auxin signaling: A toolbox for shape formation and tissue-specification in plants?</title>
        <authorList>
            <person name="Buerstenbinder K."/>
            <person name="Mitra D."/>
            <person name="Quegwer J."/>
        </authorList>
    </citation>
    <scope>REVIEW</scope>
</reference>
<feature type="chain" id="PRO_0000453132" description="Protein IQ-DOMAIN 27">
    <location>
        <begin position="1"/>
        <end position="351"/>
    </location>
</feature>
<feature type="domain" description="IQ 1" evidence="2">
    <location>
        <begin position="99"/>
        <end position="127"/>
    </location>
</feature>
<feature type="domain" description="IQ 2" evidence="2">
    <location>
        <begin position="128"/>
        <end position="150"/>
    </location>
</feature>
<feature type="region of interest" description="Disordered" evidence="4">
    <location>
        <begin position="15"/>
        <end position="37"/>
    </location>
</feature>
<feature type="region of interest" description="Calmodulin-binding" evidence="6">
    <location>
        <begin position="98"/>
        <end position="114"/>
    </location>
</feature>
<feature type="region of interest" description="Disordered" evidence="4">
    <location>
        <begin position="299"/>
        <end position="351"/>
    </location>
</feature>
<feature type="short sequence motif" description="Nuclear localization signal" evidence="3">
    <location>
        <begin position="191"/>
        <end position="198"/>
    </location>
</feature>
<feature type="compositionally biased region" description="Basic residues" evidence="4">
    <location>
        <begin position="299"/>
        <end position="310"/>
    </location>
</feature>
<feature type="compositionally biased region" description="Basic and acidic residues" evidence="4">
    <location>
        <begin position="312"/>
        <end position="321"/>
    </location>
</feature>
<feature type="compositionally biased region" description="Low complexity" evidence="4">
    <location>
        <begin position="324"/>
        <end position="337"/>
    </location>
</feature>
<name>IQD27_ARATH</name>
<sequence length="351" mass="39330">MGRAARWFKGMFGTKKSKDRSHVSGGDSVKGGDHSGDFNVPRDSVLLGTILTDTEKDQNKNAIAVATATATAADAAVSAAVVRLTSEGRAGDIIITKEERWAAVKIQKVFRGSLARKALRALKGIVKLQALVRGYLVRKRAAAMLQSIQTLIRVQTAMRSKRINRSLNKEYNNMFQPRQSFDKFDEATFDDRRTKIVEKDDRYMRRSSSRSRSRQVHNVVSMSDYEGDFVYKGNDLELCFSDEKWKFATAQNTPRLLHHHSANNRYYVMQSPAKSVGGKALCDYESSVSTPGYMEKTKSFKAKVRSHSAPRQRSERQRLSLDEVMASKSSVSGVSMSHQHPPRHSCSCDPL</sequence>